<sequence length="458" mass="49932">MYGKIERIHFVGIGGIGMSGIAEVLLNLGYKVSGSDLRKSEITERLEQLGGEIHLGHTGSNVERADVVVISSAVHDDNPEVIEARERLIPVIPRAEMLAELMRMKYGIAIAGTHGKTTTTSMVATILATGGIDPTIVIGGRLNSIGTNARLGQGKFLVAEADESDGSFLKLSPTIAVVTNIDADHLDFYSGIEEIKDTFVEFINKIPFYGLAVLCLDNGNVADIIPLVKKRFTTYGLTAQADFRATEIRHEGFTTSFVAHYKGQKLGEISFNMPGAHNVLNALATIAVATELDMRFEDIQAGFKSFGGVGRRFQVKGEVNGIMVVDDYGHHPTEIKATLAAAKGGWDRRLVVVFQPHRYTRTKELFEEFVKAFYDADILILTDIYPAGEQPIEGVTAEALSARIKRHGQREVTFVADRNKVCDHLLSIVKEGDIVLTLGAGNILQAGEQLVEKLREAP</sequence>
<evidence type="ECO:0000255" key="1">
    <source>
        <dbReference type="HAMAP-Rule" id="MF_00046"/>
    </source>
</evidence>
<dbReference type="EC" id="6.3.2.8" evidence="1"/>
<dbReference type="EMBL" id="CP001390">
    <property type="protein sequence ID" value="ACM19143.1"/>
    <property type="molecule type" value="Genomic_DNA"/>
</dbReference>
<dbReference type="RefSeq" id="WP_012645872.1">
    <property type="nucleotide sequence ID" value="NC_011979.1"/>
</dbReference>
<dbReference type="SMR" id="B9M173"/>
<dbReference type="STRING" id="316067.Geob_0781"/>
<dbReference type="KEGG" id="geo:Geob_0781"/>
<dbReference type="eggNOG" id="COG0773">
    <property type="taxonomic scope" value="Bacteria"/>
</dbReference>
<dbReference type="HOGENOM" id="CLU_028104_2_2_7"/>
<dbReference type="OrthoDB" id="9804126at2"/>
<dbReference type="UniPathway" id="UPA00219"/>
<dbReference type="Proteomes" id="UP000007721">
    <property type="component" value="Chromosome"/>
</dbReference>
<dbReference type="GO" id="GO:0005737">
    <property type="term" value="C:cytoplasm"/>
    <property type="evidence" value="ECO:0007669"/>
    <property type="project" value="UniProtKB-SubCell"/>
</dbReference>
<dbReference type="GO" id="GO:0005524">
    <property type="term" value="F:ATP binding"/>
    <property type="evidence" value="ECO:0007669"/>
    <property type="project" value="UniProtKB-UniRule"/>
</dbReference>
<dbReference type="GO" id="GO:0008763">
    <property type="term" value="F:UDP-N-acetylmuramate-L-alanine ligase activity"/>
    <property type="evidence" value="ECO:0007669"/>
    <property type="project" value="UniProtKB-UniRule"/>
</dbReference>
<dbReference type="GO" id="GO:0051301">
    <property type="term" value="P:cell division"/>
    <property type="evidence" value="ECO:0007669"/>
    <property type="project" value="UniProtKB-KW"/>
</dbReference>
<dbReference type="GO" id="GO:0071555">
    <property type="term" value="P:cell wall organization"/>
    <property type="evidence" value="ECO:0007669"/>
    <property type="project" value="UniProtKB-KW"/>
</dbReference>
<dbReference type="GO" id="GO:0009252">
    <property type="term" value="P:peptidoglycan biosynthetic process"/>
    <property type="evidence" value="ECO:0007669"/>
    <property type="project" value="UniProtKB-UniRule"/>
</dbReference>
<dbReference type="GO" id="GO:0008360">
    <property type="term" value="P:regulation of cell shape"/>
    <property type="evidence" value="ECO:0007669"/>
    <property type="project" value="UniProtKB-KW"/>
</dbReference>
<dbReference type="Gene3D" id="3.90.190.20">
    <property type="entry name" value="Mur ligase, C-terminal domain"/>
    <property type="match status" value="1"/>
</dbReference>
<dbReference type="Gene3D" id="3.40.1190.10">
    <property type="entry name" value="Mur-like, catalytic domain"/>
    <property type="match status" value="1"/>
</dbReference>
<dbReference type="Gene3D" id="3.40.50.720">
    <property type="entry name" value="NAD(P)-binding Rossmann-like Domain"/>
    <property type="match status" value="1"/>
</dbReference>
<dbReference type="HAMAP" id="MF_00046">
    <property type="entry name" value="MurC"/>
    <property type="match status" value="1"/>
</dbReference>
<dbReference type="InterPro" id="IPR036565">
    <property type="entry name" value="Mur-like_cat_sf"/>
</dbReference>
<dbReference type="InterPro" id="IPR004101">
    <property type="entry name" value="Mur_ligase_C"/>
</dbReference>
<dbReference type="InterPro" id="IPR036615">
    <property type="entry name" value="Mur_ligase_C_dom_sf"/>
</dbReference>
<dbReference type="InterPro" id="IPR013221">
    <property type="entry name" value="Mur_ligase_cen"/>
</dbReference>
<dbReference type="InterPro" id="IPR000713">
    <property type="entry name" value="Mur_ligase_N"/>
</dbReference>
<dbReference type="InterPro" id="IPR050061">
    <property type="entry name" value="MurCDEF_pg_biosynth"/>
</dbReference>
<dbReference type="InterPro" id="IPR005758">
    <property type="entry name" value="UDP-N-AcMur_Ala_ligase_MurC"/>
</dbReference>
<dbReference type="NCBIfam" id="TIGR01082">
    <property type="entry name" value="murC"/>
    <property type="match status" value="1"/>
</dbReference>
<dbReference type="PANTHER" id="PTHR43445:SF3">
    <property type="entry name" value="UDP-N-ACETYLMURAMATE--L-ALANINE LIGASE"/>
    <property type="match status" value="1"/>
</dbReference>
<dbReference type="PANTHER" id="PTHR43445">
    <property type="entry name" value="UDP-N-ACETYLMURAMATE--L-ALANINE LIGASE-RELATED"/>
    <property type="match status" value="1"/>
</dbReference>
<dbReference type="Pfam" id="PF01225">
    <property type="entry name" value="Mur_ligase"/>
    <property type="match status" value="1"/>
</dbReference>
<dbReference type="Pfam" id="PF02875">
    <property type="entry name" value="Mur_ligase_C"/>
    <property type="match status" value="1"/>
</dbReference>
<dbReference type="Pfam" id="PF08245">
    <property type="entry name" value="Mur_ligase_M"/>
    <property type="match status" value="1"/>
</dbReference>
<dbReference type="SUPFAM" id="SSF51984">
    <property type="entry name" value="MurCD N-terminal domain"/>
    <property type="match status" value="1"/>
</dbReference>
<dbReference type="SUPFAM" id="SSF53623">
    <property type="entry name" value="MurD-like peptide ligases, catalytic domain"/>
    <property type="match status" value="1"/>
</dbReference>
<dbReference type="SUPFAM" id="SSF53244">
    <property type="entry name" value="MurD-like peptide ligases, peptide-binding domain"/>
    <property type="match status" value="1"/>
</dbReference>
<organism>
    <name type="scientific">Geotalea daltonii (strain DSM 22248 / JCM 15807 / FRC-32)</name>
    <name type="common">Geobacter daltonii</name>
    <dbReference type="NCBI Taxonomy" id="316067"/>
    <lineage>
        <taxon>Bacteria</taxon>
        <taxon>Pseudomonadati</taxon>
        <taxon>Thermodesulfobacteriota</taxon>
        <taxon>Desulfuromonadia</taxon>
        <taxon>Geobacterales</taxon>
        <taxon>Geobacteraceae</taxon>
        <taxon>Geotalea</taxon>
    </lineage>
</organism>
<proteinExistence type="inferred from homology"/>
<accession>B9M173</accession>
<reference key="1">
    <citation type="submission" date="2009-01" db="EMBL/GenBank/DDBJ databases">
        <title>Complete sequence of Geobacter sp. FRC-32.</title>
        <authorList>
            <consortium name="US DOE Joint Genome Institute"/>
            <person name="Lucas S."/>
            <person name="Copeland A."/>
            <person name="Lapidus A."/>
            <person name="Glavina del Rio T."/>
            <person name="Dalin E."/>
            <person name="Tice H."/>
            <person name="Bruce D."/>
            <person name="Goodwin L."/>
            <person name="Pitluck S."/>
            <person name="Saunders E."/>
            <person name="Brettin T."/>
            <person name="Detter J.C."/>
            <person name="Han C."/>
            <person name="Larimer F."/>
            <person name="Land M."/>
            <person name="Hauser L."/>
            <person name="Kyrpides N."/>
            <person name="Ovchinnikova G."/>
            <person name="Kostka J."/>
            <person name="Richardson P."/>
        </authorList>
    </citation>
    <scope>NUCLEOTIDE SEQUENCE [LARGE SCALE GENOMIC DNA]</scope>
    <source>
        <strain>DSM 22248 / JCM 15807 / FRC-32</strain>
    </source>
</reference>
<protein>
    <recommendedName>
        <fullName evidence="1">UDP-N-acetylmuramate--L-alanine ligase</fullName>
        <ecNumber evidence="1">6.3.2.8</ecNumber>
    </recommendedName>
    <alternativeName>
        <fullName evidence="1">UDP-N-acetylmuramoyl-L-alanine synthetase</fullName>
    </alternativeName>
</protein>
<keyword id="KW-0067">ATP-binding</keyword>
<keyword id="KW-0131">Cell cycle</keyword>
<keyword id="KW-0132">Cell division</keyword>
<keyword id="KW-0133">Cell shape</keyword>
<keyword id="KW-0961">Cell wall biogenesis/degradation</keyword>
<keyword id="KW-0963">Cytoplasm</keyword>
<keyword id="KW-0436">Ligase</keyword>
<keyword id="KW-0547">Nucleotide-binding</keyword>
<keyword id="KW-0573">Peptidoglycan synthesis</keyword>
<keyword id="KW-1185">Reference proteome</keyword>
<gene>
    <name evidence="1" type="primary">murC</name>
    <name type="ordered locus">Geob_0781</name>
</gene>
<name>MURC_GEODF</name>
<comment type="function">
    <text evidence="1">Cell wall formation.</text>
</comment>
<comment type="catalytic activity">
    <reaction evidence="1">
        <text>UDP-N-acetyl-alpha-D-muramate + L-alanine + ATP = UDP-N-acetyl-alpha-D-muramoyl-L-alanine + ADP + phosphate + H(+)</text>
        <dbReference type="Rhea" id="RHEA:23372"/>
        <dbReference type="ChEBI" id="CHEBI:15378"/>
        <dbReference type="ChEBI" id="CHEBI:30616"/>
        <dbReference type="ChEBI" id="CHEBI:43474"/>
        <dbReference type="ChEBI" id="CHEBI:57972"/>
        <dbReference type="ChEBI" id="CHEBI:70757"/>
        <dbReference type="ChEBI" id="CHEBI:83898"/>
        <dbReference type="ChEBI" id="CHEBI:456216"/>
        <dbReference type="EC" id="6.3.2.8"/>
    </reaction>
</comment>
<comment type="pathway">
    <text evidence="1">Cell wall biogenesis; peptidoglycan biosynthesis.</text>
</comment>
<comment type="subcellular location">
    <subcellularLocation>
        <location evidence="1">Cytoplasm</location>
    </subcellularLocation>
</comment>
<comment type="similarity">
    <text evidence="1">Belongs to the MurCDEF family.</text>
</comment>
<feature type="chain" id="PRO_1000192093" description="UDP-N-acetylmuramate--L-alanine ligase">
    <location>
        <begin position="1"/>
        <end position="458"/>
    </location>
</feature>
<feature type="binding site" evidence="1">
    <location>
        <begin position="112"/>
        <end position="118"/>
    </location>
    <ligand>
        <name>ATP</name>
        <dbReference type="ChEBI" id="CHEBI:30616"/>
    </ligand>
</feature>